<proteinExistence type="inferred from homology"/>
<sequence>MKAPVRVAVTGAAGQIGYALLFRIASGEMLGKDQPVILQLLELPVDKAQAALKGVMMELEDCAFPLLAGMVGTDDAEVAFKDADIALLVGARPRGPGMERKDLLLENAKIFTAQGAALNKVASRDVKVLVVGNPANTNAYIAMKSAPDLKPENFTAMLRLDHNRALSQLSTKLGKPVGGMEKLVVWGNHSPTMYPDYRFATADGASIADAINDQEWNANTFIPTVGKRGAAIIEARGSSSAASAANAAIDHVRDWVLGSNGKWVTMGVPSDGSYGIPEGVIFGFAVTTENGKYTLVKDLPIDDFSQKYIDKTLAELEEERAGVAHLLG</sequence>
<accession>B2FQL8</accession>
<gene>
    <name evidence="1" type="primary">mdh</name>
    <name type="ordered locus">Smlt0944</name>
</gene>
<comment type="function">
    <text evidence="1">Catalyzes the reversible oxidation of malate to oxaloacetate.</text>
</comment>
<comment type="catalytic activity">
    <reaction evidence="1">
        <text>(S)-malate + NAD(+) = oxaloacetate + NADH + H(+)</text>
        <dbReference type="Rhea" id="RHEA:21432"/>
        <dbReference type="ChEBI" id="CHEBI:15378"/>
        <dbReference type="ChEBI" id="CHEBI:15589"/>
        <dbReference type="ChEBI" id="CHEBI:16452"/>
        <dbReference type="ChEBI" id="CHEBI:57540"/>
        <dbReference type="ChEBI" id="CHEBI:57945"/>
        <dbReference type="EC" id="1.1.1.37"/>
    </reaction>
</comment>
<comment type="similarity">
    <text evidence="1">Belongs to the LDH/MDH superfamily. MDH type 2 family.</text>
</comment>
<dbReference type="EC" id="1.1.1.37" evidence="1"/>
<dbReference type="EMBL" id="AM743169">
    <property type="protein sequence ID" value="CAQ44509.1"/>
    <property type="molecule type" value="Genomic_DNA"/>
</dbReference>
<dbReference type="RefSeq" id="WP_004153634.1">
    <property type="nucleotide sequence ID" value="NC_010943.1"/>
</dbReference>
<dbReference type="SMR" id="B2FQL8"/>
<dbReference type="EnsemblBacteria" id="CAQ44509">
    <property type="protein sequence ID" value="CAQ44509"/>
    <property type="gene ID" value="Smlt0944"/>
</dbReference>
<dbReference type="KEGG" id="sml:Smlt0944"/>
<dbReference type="eggNOG" id="COG0039">
    <property type="taxonomic scope" value="Bacteria"/>
</dbReference>
<dbReference type="HOGENOM" id="CLU_040727_2_0_6"/>
<dbReference type="Proteomes" id="UP000008840">
    <property type="component" value="Chromosome"/>
</dbReference>
<dbReference type="GO" id="GO:0030060">
    <property type="term" value="F:L-malate dehydrogenase (NAD+) activity"/>
    <property type="evidence" value="ECO:0007669"/>
    <property type="project" value="UniProtKB-UniRule"/>
</dbReference>
<dbReference type="GO" id="GO:0006108">
    <property type="term" value="P:malate metabolic process"/>
    <property type="evidence" value="ECO:0007669"/>
    <property type="project" value="InterPro"/>
</dbReference>
<dbReference type="GO" id="GO:0006099">
    <property type="term" value="P:tricarboxylic acid cycle"/>
    <property type="evidence" value="ECO:0007669"/>
    <property type="project" value="UniProtKB-UniRule"/>
</dbReference>
<dbReference type="CDD" id="cd01338">
    <property type="entry name" value="MDH_chloroplast-like"/>
    <property type="match status" value="1"/>
</dbReference>
<dbReference type="FunFam" id="3.40.50.720:FF:000010">
    <property type="entry name" value="Malate dehydrogenase"/>
    <property type="match status" value="1"/>
</dbReference>
<dbReference type="FunFam" id="3.90.110.10:FF:000002">
    <property type="entry name" value="Malate dehydrogenase"/>
    <property type="match status" value="1"/>
</dbReference>
<dbReference type="Gene3D" id="3.90.110.10">
    <property type="entry name" value="Lactate dehydrogenase/glycoside hydrolase, family 4, C-terminal"/>
    <property type="match status" value="1"/>
</dbReference>
<dbReference type="Gene3D" id="3.40.50.720">
    <property type="entry name" value="NAD(P)-binding Rossmann-like Domain"/>
    <property type="match status" value="1"/>
</dbReference>
<dbReference type="HAMAP" id="MF_01517">
    <property type="entry name" value="Malate_dehydrog_2"/>
    <property type="match status" value="1"/>
</dbReference>
<dbReference type="InterPro" id="IPR001557">
    <property type="entry name" value="L-lactate/malate_DH"/>
</dbReference>
<dbReference type="InterPro" id="IPR022383">
    <property type="entry name" value="Lactate/malate_DH_C"/>
</dbReference>
<dbReference type="InterPro" id="IPR001236">
    <property type="entry name" value="Lactate/malate_DH_N"/>
</dbReference>
<dbReference type="InterPro" id="IPR015955">
    <property type="entry name" value="Lactate_DH/Glyco_Ohase_4_C"/>
</dbReference>
<dbReference type="InterPro" id="IPR010945">
    <property type="entry name" value="Malate_DH_type2"/>
</dbReference>
<dbReference type="InterPro" id="IPR036291">
    <property type="entry name" value="NAD(P)-bd_dom_sf"/>
</dbReference>
<dbReference type="NCBIfam" id="TIGR01759">
    <property type="entry name" value="MalateDH-SF1"/>
    <property type="match status" value="1"/>
</dbReference>
<dbReference type="NCBIfam" id="NF003916">
    <property type="entry name" value="PRK05442.1"/>
    <property type="match status" value="1"/>
</dbReference>
<dbReference type="PANTHER" id="PTHR23382">
    <property type="entry name" value="MALATE DEHYDROGENASE"/>
    <property type="match status" value="1"/>
</dbReference>
<dbReference type="Pfam" id="PF02866">
    <property type="entry name" value="Ldh_1_C"/>
    <property type="match status" value="1"/>
</dbReference>
<dbReference type="Pfam" id="PF00056">
    <property type="entry name" value="Ldh_1_N"/>
    <property type="match status" value="1"/>
</dbReference>
<dbReference type="PIRSF" id="PIRSF000102">
    <property type="entry name" value="Lac_mal_DH"/>
    <property type="match status" value="1"/>
</dbReference>
<dbReference type="SUPFAM" id="SSF56327">
    <property type="entry name" value="LDH C-terminal domain-like"/>
    <property type="match status" value="1"/>
</dbReference>
<dbReference type="SUPFAM" id="SSF51735">
    <property type="entry name" value="NAD(P)-binding Rossmann-fold domains"/>
    <property type="match status" value="1"/>
</dbReference>
<name>MDH_STRMK</name>
<organism>
    <name type="scientific">Stenotrophomonas maltophilia (strain K279a)</name>
    <dbReference type="NCBI Taxonomy" id="522373"/>
    <lineage>
        <taxon>Bacteria</taxon>
        <taxon>Pseudomonadati</taxon>
        <taxon>Pseudomonadota</taxon>
        <taxon>Gammaproteobacteria</taxon>
        <taxon>Lysobacterales</taxon>
        <taxon>Lysobacteraceae</taxon>
        <taxon>Stenotrophomonas</taxon>
        <taxon>Stenotrophomonas maltophilia group</taxon>
    </lineage>
</organism>
<feature type="chain" id="PRO_1000191629" description="Malate dehydrogenase">
    <location>
        <begin position="1"/>
        <end position="328"/>
    </location>
</feature>
<feature type="active site" description="Proton acceptor" evidence="1">
    <location>
        <position position="189"/>
    </location>
</feature>
<feature type="binding site" evidence="1">
    <location>
        <begin position="11"/>
        <end position="17"/>
    </location>
    <ligand>
        <name>NAD(+)</name>
        <dbReference type="ChEBI" id="CHEBI:57540"/>
    </ligand>
</feature>
<feature type="binding site" evidence="1">
    <location>
        <position position="94"/>
    </location>
    <ligand>
        <name>substrate</name>
    </ligand>
</feature>
<feature type="binding site" evidence="1">
    <location>
        <position position="100"/>
    </location>
    <ligand>
        <name>substrate</name>
    </ligand>
</feature>
<feature type="binding site" evidence="1">
    <location>
        <position position="107"/>
    </location>
    <ligand>
        <name>NAD(+)</name>
        <dbReference type="ChEBI" id="CHEBI:57540"/>
    </ligand>
</feature>
<feature type="binding site" evidence="1">
    <location>
        <position position="114"/>
    </location>
    <ligand>
        <name>NAD(+)</name>
        <dbReference type="ChEBI" id="CHEBI:57540"/>
    </ligand>
</feature>
<feature type="binding site" evidence="1">
    <location>
        <begin position="131"/>
        <end position="133"/>
    </location>
    <ligand>
        <name>NAD(+)</name>
        <dbReference type="ChEBI" id="CHEBI:57540"/>
    </ligand>
</feature>
<feature type="binding site" evidence="1">
    <location>
        <position position="133"/>
    </location>
    <ligand>
        <name>substrate</name>
    </ligand>
</feature>
<feature type="binding site" evidence="1">
    <location>
        <position position="164"/>
    </location>
    <ligand>
        <name>substrate</name>
    </ligand>
</feature>
<evidence type="ECO:0000255" key="1">
    <source>
        <dbReference type="HAMAP-Rule" id="MF_01517"/>
    </source>
</evidence>
<keyword id="KW-0520">NAD</keyword>
<keyword id="KW-0560">Oxidoreductase</keyword>
<keyword id="KW-1185">Reference proteome</keyword>
<keyword id="KW-0816">Tricarboxylic acid cycle</keyword>
<reference key="1">
    <citation type="journal article" date="2008" name="Genome Biol.">
        <title>The complete genome, comparative and functional analysis of Stenotrophomonas maltophilia reveals an organism heavily shielded by drug resistance determinants.</title>
        <authorList>
            <person name="Crossman L.C."/>
            <person name="Gould V.C."/>
            <person name="Dow J.M."/>
            <person name="Vernikos G.S."/>
            <person name="Okazaki A."/>
            <person name="Sebaihia M."/>
            <person name="Saunders D."/>
            <person name="Arrowsmith C."/>
            <person name="Carver T."/>
            <person name="Peters N."/>
            <person name="Adlem E."/>
            <person name="Kerhornou A."/>
            <person name="Lord A."/>
            <person name="Murphy L."/>
            <person name="Seeger K."/>
            <person name="Squares R."/>
            <person name="Rutter S."/>
            <person name="Quail M.A."/>
            <person name="Rajandream M.A."/>
            <person name="Harris D."/>
            <person name="Churcher C."/>
            <person name="Bentley S.D."/>
            <person name="Parkhill J."/>
            <person name="Thomson N.R."/>
            <person name="Avison M.B."/>
        </authorList>
    </citation>
    <scope>NUCLEOTIDE SEQUENCE [LARGE SCALE GENOMIC DNA]</scope>
    <source>
        <strain>K279a</strain>
    </source>
</reference>
<protein>
    <recommendedName>
        <fullName evidence="1">Malate dehydrogenase</fullName>
        <ecNumber evidence="1">1.1.1.37</ecNumber>
    </recommendedName>
</protein>